<gene>
    <name evidence="1" type="primary">cep55</name>
    <name type="synonym">cep55l</name>
    <name type="synonym">zgc:112184</name>
</gene>
<comment type="function">
    <text evidence="1 4">Plays a role in mitotic exit and cytokinesis. Recruits PDCD6IP and TSG101 to midbody during cytokinesis. Required for successful completion of cytokinesis. Not required for microtubule nucleation (By similarity). Plays a role in the development of the brain and kidney (PubMed:28264986).</text>
</comment>
<comment type="subcellular location">
    <subcellularLocation>
        <location evidence="1">Cytoplasm</location>
    </subcellularLocation>
    <subcellularLocation>
        <location evidence="1">Cytoplasm</location>
        <location evidence="1">Cytoskeleton</location>
        <location evidence="1">Microtubule organizing center</location>
        <location evidence="1">Centrosome</location>
        <location evidence="1">Centriole</location>
    </subcellularLocation>
    <subcellularLocation>
        <location evidence="1">Cytoplasm</location>
        <location evidence="1">Cytoskeleton</location>
        <location evidence="1">Microtubule organizing center</location>
        <location evidence="1">Centrosome</location>
    </subcellularLocation>
    <subcellularLocation>
        <location evidence="1">Cleavage furrow</location>
    </subcellularLocation>
    <subcellularLocation>
        <location evidence="1">Midbody</location>
        <location evidence="1">Midbody ring</location>
    </subcellularLocation>
</comment>
<comment type="disruption phenotype">
    <text evidence="4">Morpholino knockdown of the protein increases jaw cartilage disorganization, decreases the size of brain structures and the lateral area and convolution of proximal renal tubules at 4 days post-fertilization (dpf) (PubMed:28264986). Embryos with CRISPR-induced cep55l null mutations display altered craniofacial patterning and atrophy of the proximal renal tubules (PubMed:28264986).</text>
</comment>
<organism evidence="5">
    <name type="scientific">Danio rerio</name>
    <name type="common">Zebrafish</name>
    <name type="synonym">Brachydanio rerio</name>
    <dbReference type="NCBI Taxonomy" id="7955"/>
    <lineage>
        <taxon>Eukaryota</taxon>
        <taxon>Metazoa</taxon>
        <taxon>Chordata</taxon>
        <taxon>Craniata</taxon>
        <taxon>Vertebrata</taxon>
        <taxon>Euteleostomi</taxon>
        <taxon>Actinopterygii</taxon>
        <taxon>Neopterygii</taxon>
        <taxon>Teleostei</taxon>
        <taxon>Ostariophysi</taxon>
        <taxon>Cypriniformes</taxon>
        <taxon>Danionidae</taxon>
        <taxon>Danioninae</taxon>
        <taxon>Danio</taxon>
    </lineage>
</organism>
<keyword id="KW-0175">Coiled coil</keyword>
<keyword id="KW-0963">Cytoplasm</keyword>
<keyword id="KW-0206">Cytoskeleton</keyword>
<keyword id="KW-0217">Developmental protein</keyword>
<keyword id="KW-1185">Reference proteome</keyword>
<proteinExistence type="evidence at transcript level"/>
<name>CEP55_DANRE</name>
<evidence type="ECO:0000250" key="1">
    <source>
        <dbReference type="UniProtKB" id="Q53EZ4"/>
    </source>
</evidence>
<evidence type="ECO:0000255" key="2"/>
<evidence type="ECO:0000256" key="3">
    <source>
        <dbReference type="SAM" id="MobiDB-lite"/>
    </source>
</evidence>
<evidence type="ECO:0000269" key="4">
    <source>
    </source>
</evidence>
<evidence type="ECO:0000312" key="5">
    <source>
        <dbReference type="EMBL" id="AAH95686.1"/>
    </source>
</evidence>
<protein>
    <recommendedName>
        <fullName evidence="1">Centrosomal protein of 55 kDa</fullName>
    </recommendedName>
    <alternativeName>
        <fullName>Centrosomal protein 55-like</fullName>
    </alternativeName>
</protein>
<sequence>MAAKGAKETLVNKLGFKSSSSSSKSAELEVEKLKRENQQMKKSLEDMKRAGRHQHTHPDTDKARLLERILALETLREKNNQQLLGREQEITTLRQQLRSAHGEVVSSLQSQLENKQHEAEQRERQYQALVKETEDLKNKYCAVSERCDTLEKQKGSSGELAVVQEQLRDALEKNQHWLVYDQQREAYVQGVLARIKDLEAQLNEANQALQQQHKEAKSDDQSAQKVQQELEAERNKVSRMQMEVEDLQVRYEEKSREAAQAREQLLEERRREREDRKSSVERDALLQDQHRKREAELIMQVNLLQKSLMNQKEEQKRMAILEQQIQLSAKESENEKLDRQTLQHQLHKVLKELRKARDQITRLESSKQQRESRFSEPSSYNRMDLERLTIQDHMTSPSKVHNILDESVLECPNCGASYPTSQHRELLAHLDYCFT</sequence>
<dbReference type="EMBL" id="AL929469">
    <property type="status" value="NOT_ANNOTATED_CDS"/>
    <property type="molecule type" value="Genomic_DNA"/>
</dbReference>
<dbReference type="EMBL" id="CT033834">
    <property type="status" value="NOT_ANNOTATED_CDS"/>
    <property type="molecule type" value="Genomic_DNA"/>
</dbReference>
<dbReference type="EMBL" id="CU459019">
    <property type="status" value="NOT_ANNOTATED_CDS"/>
    <property type="molecule type" value="Genomic_DNA"/>
</dbReference>
<dbReference type="EMBL" id="CU459121">
    <property type="status" value="NOT_ANNOTATED_CDS"/>
    <property type="molecule type" value="Genomic_DNA"/>
</dbReference>
<dbReference type="EMBL" id="CU459209">
    <property type="status" value="NOT_ANNOTATED_CDS"/>
    <property type="molecule type" value="Genomic_DNA"/>
</dbReference>
<dbReference type="EMBL" id="CU463858">
    <property type="status" value="NOT_ANNOTATED_CDS"/>
    <property type="molecule type" value="Genomic_DNA"/>
</dbReference>
<dbReference type="EMBL" id="BC095686">
    <property type="protein sequence ID" value="AAH95686.1"/>
    <property type="molecule type" value="mRNA"/>
</dbReference>
<dbReference type="RefSeq" id="NP_001018598.1">
    <property type="nucleotide sequence ID" value="NM_001020762.1"/>
</dbReference>
<dbReference type="SMR" id="Q502I3"/>
<dbReference type="FunCoup" id="Q502I3">
    <property type="interactions" value="287"/>
</dbReference>
<dbReference type="STRING" id="7955.ENSDARP00000136406"/>
<dbReference type="PaxDb" id="7955-ENSDARP00000048255"/>
<dbReference type="Ensembl" id="ENSDART00000166600">
    <property type="protein sequence ID" value="ENSDARP00000136406"/>
    <property type="gene ID" value="ENSDARG00000102349"/>
</dbReference>
<dbReference type="GeneID" id="553800"/>
<dbReference type="KEGG" id="dre:553800"/>
<dbReference type="AGR" id="ZFIN:ZDB-GENE-050522-222"/>
<dbReference type="CTD" id="553800"/>
<dbReference type="ZFIN" id="ZDB-GENE-050522-222">
    <property type="gene designation" value="cep55l"/>
</dbReference>
<dbReference type="eggNOG" id="ENOG502QTDI">
    <property type="taxonomic scope" value="Eukaryota"/>
</dbReference>
<dbReference type="HOGENOM" id="CLU_047132_0_0_1"/>
<dbReference type="InParanoid" id="Q502I3"/>
<dbReference type="OMA" id="AVMAKCS"/>
<dbReference type="OrthoDB" id="8441172at2759"/>
<dbReference type="PhylomeDB" id="Q502I3"/>
<dbReference type="TreeFam" id="TF331107"/>
<dbReference type="PRO" id="PR:Q502I3"/>
<dbReference type="Proteomes" id="UP000000437">
    <property type="component" value="Chromosome 12"/>
</dbReference>
<dbReference type="Bgee" id="ENSDARG00000102349">
    <property type="expression patterns" value="Expressed in testis and 29 other cell types or tissues"/>
</dbReference>
<dbReference type="GO" id="GO:0005814">
    <property type="term" value="C:centriole"/>
    <property type="evidence" value="ECO:0007669"/>
    <property type="project" value="UniProtKB-SubCell"/>
</dbReference>
<dbReference type="GO" id="GO:0005813">
    <property type="term" value="C:centrosome"/>
    <property type="evidence" value="ECO:0007669"/>
    <property type="project" value="UniProtKB-SubCell"/>
</dbReference>
<dbReference type="GO" id="GO:0032154">
    <property type="term" value="C:cleavage furrow"/>
    <property type="evidence" value="ECO:0007669"/>
    <property type="project" value="UniProtKB-SubCell"/>
</dbReference>
<dbReference type="GO" id="GO:0005737">
    <property type="term" value="C:cytoplasm"/>
    <property type="evidence" value="ECO:0007669"/>
    <property type="project" value="UniProtKB-SubCell"/>
</dbReference>
<dbReference type="GO" id="GO:0090543">
    <property type="term" value="C:Flemming body"/>
    <property type="evidence" value="ECO:0007669"/>
    <property type="project" value="UniProtKB-SubCell"/>
</dbReference>
<dbReference type="GO" id="GO:0030496">
    <property type="term" value="C:midbody"/>
    <property type="evidence" value="ECO:0000318"/>
    <property type="project" value="GO_Central"/>
</dbReference>
<dbReference type="GO" id="GO:0021549">
    <property type="term" value="P:cerebellum development"/>
    <property type="evidence" value="ECO:0000315"/>
    <property type="project" value="ZFIN"/>
</dbReference>
<dbReference type="GO" id="GO:1904888">
    <property type="term" value="P:cranial skeletal system development"/>
    <property type="evidence" value="ECO:0000315"/>
    <property type="project" value="ZFIN"/>
</dbReference>
<dbReference type="GO" id="GO:0045184">
    <property type="term" value="P:establishment of protein localization"/>
    <property type="evidence" value="ECO:0000318"/>
    <property type="project" value="GO_Central"/>
</dbReference>
<dbReference type="GO" id="GO:0000281">
    <property type="term" value="P:mitotic cytokinesis"/>
    <property type="evidence" value="ECO:0000318"/>
    <property type="project" value="GO_Central"/>
</dbReference>
<dbReference type="GO" id="GO:0051896">
    <property type="term" value="P:regulation of phosphatidylinositol 3-kinase/protein kinase B signal transduction"/>
    <property type="evidence" value="ECO:0000315"/>
    <property type="project" value="ZFIN"/>
</dbReference>
<dbReference type="FunFam" id="1.20.5.1180:FF:000002">
    <property type="entry name" value="Centrosomal protein of 55 kDa"/>
    <property type="match status" value="1"/>
</dbReference>
<dbReference type="Gene3D" id="1.20.5.1180">
    <property type="entry name" value="Geminin coiled-coil domain"/>
    <property type="match status" value="1"/>
</dbReference>
<dbReference type="InterPro" id="IPR038926">
    <property type="entry name" value="CEP55"/>
</dbReference>
<dbReference type="InterPro" id="IPR022008">
    <property type="entry name" value="EABR"/>
</dbReference>
<dbReference type="PANTHER" id="PTHR31838">
    <property type="entry name" value="CENTROSOMAL PROTEIN OF 55 KDA"/>
    <property type="match status" value="1"/>
</dbReference>
<dbReference type="PANTHER" id="PTHR31838:SF1">
    <property type="entry name" value="CENTROSOMAL PROTEIN OF 55 KDA"/>
    <property type="match status" value="1"/>
</dbReference>
<dbReference type="Pfam" id="PF12180">
    <property type="entry name" value="EABR"/>
    <property type="match status" value="1"/>
</dbReference>
<reference key="1">
    <citation type="journal article" date="2013" name="Nature">
        <title>The zebrafish reference genome sequence and its relationship to the human genome.</title>
        <authorList>
            <person name="Howe K."/>
            <person name="Clark M.D."/>
            <person name="Torroja C.F."/>
            <person name="Torrance J."/>
            <person name="Berthelot C."/>
            <person name="Muffato M."/>
            <person name="Collins J.E."/>
            <person name="Humphray S."/>
            <person name="McLaren K."/>
            <person name="Matthews L."/>
            <person name="McLaren S."/>
            <person name="Sealy I."/>
            <person name="Caccamo M."/>
            <person name="Churcher C."/>
            <person name="Scott C."/>
            <person name="Barrett J.C."/>
            <person name="Koch R."/>
            <person name="Rauch G.J."/>
            <person name="White S."/>
            <person name="Chow W."/>
            <person name="Kilian B."/>
            <person name="Quintais L.T."/>
            <person name="Guerra-Assuncao J.A."/>
            <person name="Zhou Y."/>
            <person name="Gu Y."/>
            <person name="Yen J."/>
            <person name="Vogel J.H."/>
            <person name="Eyre T."/>
            <person name="Redmond S."/>
            <person name="Banerjee R."/>
            <person name="Chi J."/>
            <person name="Fu B."/>
            <person name="Langley E."/>
            <person name="Maguire S.F."/>
            <person name="Laird G.K."/>
            <person name="Lloyd D."/>
            <person name="Kenyon E."/>
            <person name="Donaldson S."/>
            <person name="Sehra H."/>
            <person name="Almeida-King J."/>
            <person name="Loveland J."/>
            <person name="Trevanion S."/>
            <person name="Jones M."/>
            <person name="Quail M."/>
            <person name="Willey D."/>
            <person name="Hunt A."/>
            <person name="Burton J."/>
            <person name="Sims S."/>
            <person name="McLay K."/>
            <person name="Plumb B."/>
            <person name="Davis J."/>
            <person name="Clee C."/>
            <person name="Oliver K."/>
            <person name="Clark R."/>
            <person name="Riddle C."/>
            <person name="Elliot D."/>
            <person name="Threadgold G."/>
            <person name="Harden G."/>
            <person name="Ware D."/>
            <person name="Begum S."/>
            <person name="Mortimore B."/>
            <person name="Kerry G."/>
            <person name="Heath P."/>
            <person name="Phillimore B."/>
            <person name="Tracey A."/>
            <person name="Corby N."/>
            <person name="Dunn M."/>
            <person name="Johnson C."/>
            <person name="Wood J."/>
            <person name="Clark S."/>
            <person name="Pelan S."/>
            <person name="Griffiths G."/>
            <person name="Smith M."/>
            <person name="Glithero R."/>
            <person name="Howden P."/>
            <person name="Barker N."/>
            <person name="Lloyd C."/>
            <person name="Stevens C."/>
            <person name="Harley J."/>
            <person name="Holt K."/>
            <person name="Panagiotidis G."/>
            <person name="Lovell J."/>
            <person name="Beasley H."/>
            <person name="Henderson C."/>
            <person name="Gordon D."/>
            <person name="Auger K."/>
            <person name="Wright D."/>
            <person name="Collins J."/>
            <person name="Raisen C."/>
            <person name="Dyer L."/>
            <person name="Leung K."/>
            <person name="Robertson L."/>
            <person name="Ambridge K."/>
            <person name="Leongamornlert D."/>
            <person name="McGuire S."/>
            <person name="Gilderthorp R."/>
            <person name="Griffiths C."/>
            <person name="Manthravadi D."/>
            <person name="Nichol S."/>
            <person name="Barker G."/>
            <person name="Whitehead S."/>
            <person name="Kay M."/>
            <person name="Brown J."/>
            <person name="Murnane C."/>
            <person name="Gray E."/>
            <person name="Humphries M."/>
            <person name="Sycamore N."/>
            <person name="Barker D."/>
            <person name="Saunders D."/>
            <person name="Wallis J."/>
            <person name="Babbage A."/>
            <person name="Hammond S."/>
            <person name="Mashreghi-Mohammadi M."/>
            <person name="Barr L."/>
            <person name="Martin S."/>
            <person name="Wray P."/>
            <person name="Ellington A."/>
            <person name="Matthews N."/>
            <person name="Ellwood M."/>
            <person name="Woodmansey R."/>
            <person name="Clark G."/>
            <person name="Cooper J."/>
            <person name="Tromans A."/>
            <person name="Grafham D."/>
            <person name="Skuce C."/>
            <person name="Pandian R."/>
            <person name="Andrews R."/>
            <person name="Harrison E."/>
            <person name="Kimberley A."/>
            <person name="Garnett J."/>
            <person name="Fosker N."/>
            <person name="Hall R."/>
            <person name="Garner P."/>
            <person name="Kelly D."/>
            <person name="Bird C."/>
            <person name="Palmer S."/>
            <person name="Gehring I."/>
            <person name="Berger A."/>
            <person name="Dooley C.M."/>
            <person name="Ersan-Urun Z."/>
            <person name="Eser C."/>
            <person name="Geiger H."/>
            <person name="Geisler M."/>
            <person name="Karotki L."/>
            <person name="Kirn A."/>
            <person name="Konantz J."/>
            <person name="Konantz M."/>
            <person name="Oberlander M."/>
            <person name="Rudolph-Geiger S."/>
            <person name="Teucke M."/>
            <person name="Lanz C."/>
            <person name="Raddatz G."/>
            <person name="Osoegawa K."/>
            <person name="Zhu B."/>
            <person name="Rapp A."/>
            <person name="Widaa S."/>
            <person name="Langford C."/>
            <person name="Yang F."/>
            <person name="Schuster S.C."/>
            <person name="Carter N.P."/>
            <person name="Harrow J."/>
            <person name="Ning Z."/>
            <person name="Herrero J."/>
            <person name="Searle S.M."/>
            <person name="Enright A."/>
            <person name="Geisler R."/>
            <person name="Plasterk R.H."/>
            <person name="Lee C."/>
            <person name="Westerfield M."/>
            <person name="de Jong P.J."/>
            <person name="Zon L.I."/>
            <person name="Postlethwait J.H."/>
            <person name="Nusslein-Volhard C."/>
            <person name="Hubbard T.J."/>
            <person name="Roest Crollius H."/>
            <person name="Rogers J."/>
            <person name="Stemple D.L."/>
        </authorList>
    </citation>
    <scope>NUCLEOTIDE SEQUENCE [LARGE SCALE GENOMIC DNA]</scope>
    <source>
        <strain>Tuebingen</strain>
    </source>
</reference>
<reference key="2">
    <citation type="submission" date="2003-01" db="EMBL/GenBank/DDBJ databases">
        <authorList>
            <consortium name="NIH - Zebrafish Gene Collection (ZGC) project"/>
        </authorList>
    </citation>
    <scope>NUCLEOTIDE SEQUENCE [LARGE SCALE MRNA]</scope>
    <source>
        <tissue>Embryo</tissue>
    </source>
</reference>
<reference key="3">
    <citation type="journal article" date="2017" name="J. Med. Genet.">
        <title>A truncating mutation in CEP55 is the likely cause of MARCH, a novel syndrome affecting neuronal mitosis.</title>
        <authorList>
            <consortium name="FORGE Canada Consortium"/>
            <consortium name="Canadian Rare Diseases: Models &amp; Mechanisms Network,"/>
            <person name="Frosk P."/>
            <person name="Arts H.H."/>
            <person name="Philippe J."/>
            <person name="Gunn C.S."/>
            <person name="Brown E.L."/>
            <person name="Chodirker B."/>
            <person name="Simard L."/>
            <person name="Majewski J."/>
            <person name="Fahiminiya S."/>
            <person name="Russell C."/>
            <person name="Liu Y.P."/>
            <person name="Hegele R."/>
            <person name="Katsanis N."/>
            <person name="Goerz C."/>
            <person name="Del Bigio M.R."/>
            <person name="Davis E.E."/>
        </authorList>
    </citation>
    <scope>FUNCTION</scope>
    <scope>DISRUPTION PHENOTYPE</scope>
</reference>
<accession>Q502I3</accession>
<feature type="chain" id="PRO_0000442364" description="Centrosomal protein of 55 kDa">
    <location>
        <begin position="1"/>
        <end position="435"/>
    </location>
</feature>
<feature type="region of interest" description="Disordered" evidence="3">
    <location>
        <begin position="1"/>
        <end position="63"/>
    </location>
</feature>
<feature type="region of interest" description="Disordered" evidence="3">
    <location>
        <begin position="213"/>
        <end position="239"/>
    </location>
</feature>
<feature type="region of interest" description="Disordered" evidence="3">
    <location>
        <begin position="268"/>
        <end position="287"/>
    </location>
</feature>
<feature type="coiled-coil region" evidence="2">
    <location>
        <begin position="18"/>
        <end position="140"/>
    </location>
</feature>
<feature type="coiled-coil region" evidence="2">
    <location>
        <begin position="185"/>
        <end position="373"/>
    </location>
</feature>
<feature type="compositionally biased region" description="Basic and acidic residues" evidence="3">
    <location>
        <begin position="26"/>
        <end position="49"/>
    </location>
</feature>
<feature type="compositionally biased region" description="Basic and acidic residues" evidence="3">
    <location>
        <begin position="213"/>
        <end position="222"/>
    </location>
</feature>